<organism>
    <name type="scientific">Danio rerio</name>
    <name type="common">Zebrafish</name>
    <name type="synonym">Brachydanio rerio</name>
    <dbReference type="NCBI Taxonomy" id="7955"/>
    <lineage>
        <taxon>Eukaryota</taxon>
        <taxon>Metazoa</taxon>
        <taxon>Chordata</taxon>
        <taxon>Craniata</taxon>
        <taxon>Vertebrata</taxon>
        <taxon>Euteleostomi</taxon>
        <taxon>Actinopterygii</taxon>
        <taxon>Neopterygii</taxon>
        <taxon>Teleostei</taxon>
        <taxon>Ostariophysi</taxon>
        <taxon>Cypriniformes</taxon>
        <taxon>Danionidae</taxon>
        <taxon>Danioninae</taxon>
        <taxon>Danio</taxon>
    </lineage>
</organism>
<gene>
    <name type="primary">vps26b</name>
    <name type="ORF">zgc:56297</name>
</gene>
<keyword id="KW-0963">Cytoplasm</keyword>
<keyword id="KW-0967">Endosome</keyword>
<keyword id="KW-0472">Membrane</keyword>
<keyword id="KW-0653">Protein transport</keyword>
<keyword id="KW-1185">Reference proteome</keyword>
<keyword id="KW-0813">Transport</keyword>
<protein>
    <recommendedName>
        <fullName>Vacuolar protein sorting-associated protein 26B</fullName>
    </recommendedName>
    <alternativeName>
        <fullName>Vesicle protein sorting 26B</fullName>
    </alternativeName>
</protein>
<proteinExistence type="evidence at transcript level"/>
<feature type="chain" id="PRO_0000247092" description="Vacuolar protein sorting-associated protein 26B">
    <location>
        <begin position="1"/>
        <end position="331"/>
    </location>
</feature>
<feature type="region of interest" description="Disordered" evidence="2">
    <location>
        <begin position="310"/>
        <end position="331"/>
    </location>
</feature>
<evidence type="ECO:0000250" key="1">
    <source>
        <dbReference type="UniProtKB" id="Q8C0E2"/>
    </source>
</evidence>
<evidence type="ECO:0000256" key="2">
    <source>
        <dbReference type="SAM" id="MobiDB-lite"/>
    </source>
</evidence>
<evidence type="ECO:0000305" key="3"/>
<reference key="1">
    <citation type="submission" date="2003-01" db="EMBL/GenBank/DDBJ databases">
        <authorList>
            <consortium name="NIH - Zebrafish Gene Collection (ZGC) project"/>
        </authorList>
    </citation>
    <scope>NUCLEOTIDE SEQUENCE [LARGE SCALE MRNA]</scope>
    <source>
        <strain>SJD</strain>
    </source>
</reference>
<name>VP26B_DANRE</name>
<comment type="function">
    <text evidence="1">Acts as a component of the retromer cargo-selective complex (CSC). The CSC is believed to be the core functional component of retromer or respective retromer complex variants acting to prevent missorting of selected transmembrane cargo proteins into the lysosomal degradation pathway. Retromer mediates retrograde transport of cargo proteins from endosomes to the trans-Golgi network (TGN) (By similarity).</text>
</comment>
<comment type="subunit">
    <text evidence="1">Component of the heterotrimeric retromer cargo-selective complex (CSC) which is believed to associate with variable sorting nexins to form functionally distinct retromer complex variants (By similarity).</text>
</comment>
<comment type="subcellular location">
    <subcellularLocation>
        <location evidence="1">Cytoplasm</location>
    </subcellularLocation>
    <subcellularLocation>
        <location>Membrane</location>
        <topology evidence="1">Peripheral membrane protein</topology>
    </subcellularLocation>
    <subcellularLocation>
        <location evidence="1">Endosome</location>
    </subcellularLocation>
</comment>
<comment type="similarity">
    <text evidence="3">Belongs to the VPS26 family.</text>
</comment>
<sequence>MSFFGFGQTAEIDIVLNDAETRKKVEHKTEDGKKDKYFLFYDGETVSGKVNVTLKTPGKRLEHYGIKIEFVGQIELYYDRGNHHEFVSLVKDLARPGELSQSQTFDFEFTHVEKPYESYTGQNVKLRYFLRATISRRLNDISKEMDIVVQTLCTYPEINSSIKMEVGIEDCLHIEFEYNKSKYHLRDVIVGKIYFLLVRIKIKHMEIDIIKRETTGTGPSVYHENDTIAKYEIMDGAPVRGESIPIRLFLAGYEMTPTMRDINKKFSVRYYLNLVLIDEEERRYFKQQEITLWRKGDIVRRSMSQQATIAAQRYEGSNPEPTSAQAKEETD</sequence>
<dbReference type="EMBL" id="BC046056">
    <property type="protein sequence ID" value="AAH46056.1"/>
    <property type="molecule type" value="mRNA"/>
</dbReference>
<dbReference type="RefSeq" id="NP_998540.1">
    <property type="nucleotide sequence ID" value="NM_213375.1"/>
</dbReference>
<dbReference type="SMR" id="Q7ZV03"/>
<dbReference type="FunCoup" id="Q7ZV03">
    <property type="interactions" value="2886"/>
</dbReference>
<dbReference type="STRING" id="7955.ENSDARP00000020396"/>
<dbReference type="PaxDb" id="7955-ENSDARP00000020396"/>
<dbReference type="DNASU" id="406684"/>
<dbReference type="Ensembl" id="ENSDART00000022015">
    <property type="protein sequence ID" value="ENSDARP00000020396"/>
    <property type="gene ID" value="ENSDARG00000015823"/>
</dbReference>
<dbReference type="GeneID" id="406684"/>
<dbReference type="KEGG" id="dre:406684"/>
<dbReference type="AGR" id="ZFIN:ZDB-GENE-040426-2699"/>
<dbReference type="CTD" id="112936"/>
<dbReference type="ZFIN" id="ZDB-GENE-040426-2699">
    <property type="gene designation" value="vps26b"/>
</dbReference>
<dbReference type="eggNOG" id="KOG3063">
    <property type="taxonomic scope" value="Eukaryota"/>
</dbReference>
<dbReference type="HOGENOM" id="CLU_031077_0_0_1"/>
<dbReference type="InParanoid" id="Q7ZV03"/>
<dbReference type="OMA" id="LVRINIK"/>
<dbReference type="OrthoDB" id="3821113at2759"/>
<dbReference type="PhylomeDB" id="Q7ZV03"/>
<dbReference type="TreeFam" id="TF300907"/>
<dbReference type="PRO" id="PR:Q7ZV03"/>
<dbReference type="Proteomes" id="UP000000437">
    <property type="component" value="Alternate scaffold 15"/>
</dbReference>
<dbReference type="Proteomes" id="UP000000437">
    <property type="component" value="Chromosome 15"/>
</dbReference>
<dbReference type="Bgee" id="ENSDARG00000015823">
    <property type="expression patterns" value="Expressed in granulocyte and 28 other cell types or tissues"/>
</dbReference>
<dbReference type="ExpressionAtlas" id="Q7ZV03">
    <property type="expression patterns" value="baseline and differential"/>
</dbReference>
<dbReference type="GO" id="GO:0005829">
    <property type="term" value="C:cytosol"/>
    <property type="evidence" value="ECO:0007669"/>
    <property type="project" value="GOC"/>
</dbReference>
<dbReference type="GO" id="GO:0005768">
    <property type="term" value="C:endosome"/>
    <property type="evidence" value="ECO:0000318"/>
    <property type="project" value="GO_Central"/>
</dbReference>
<dbReference type="GO" id="GO:0030904">
    <property type="term" value="C:retromer complex"/>
    <property type="evidence" value="ECO:0000318"/>
    <property type="project" value="GO_Central"/>
</dbReference>
<dbReference type="GO" id="GO:0006886">
    <property type="term" value="P:intracellular protein transport"/>
    <property type="evidence" value="ECO:0000318"/>
    <property type="project" value="GO_Central"/>
</dbReference>
<dbReference type="GO" id="GO:0042147">
    <property type="term" value="P:retrograde transport, endosome to Golgi"/>
    <property type="evidence" value="ECO:0000318"/>
    <property type="project" value="GO_Central"/>
</dbReference>
<dbReference type="FunFam" id="2.60.40.640:FF:000001">
    <property type="entry name" value="Vacuolar protein sorting-associated protein 26A"/>
    <property type="match status" value="1"/>
</dbReference>
<dbReference type="FunFam" id="2.60.40.640:FF:000002">
    <property type="entry name" value="Vacuolar protein sorting-associated protein 26A"/>
    <property type="match status" value="1"/>
</dbReference>
<dbReference type="Gene3D" id="2.60.40.640">
    <property type="match status" value="2"/>
</dbReference>
<dbReference type="InterPro" id="IPR014752">
    <property type="entry name" value="Arrestin-like_C"/>
</dbReference>
<dbReference type="InterPro" id="IPR028934">
    <property type="entry name" value="Vps26-related"/>
</dbReference>
<dbReference type="PANTHER" id="PTHR12233">
    <property type="entry name" value="VACUOLAR PROTEIN SORTING 26 RELATED"/>
    <property type="match status" value="1"/>
</dbReference>
<dbReference type="Pfam" id="PF03643">
    <property type="entry name" value="Vps26"/>
    <property type="match status" value="1"/>
</dbReference>
<accession>Q7ZV03</accession>